<comment type="function">
    <text evidence="1">Catalyzes the condensation of carbamoyl phosphate and aspartate to form carbamoyl aspartate and inorganic phosphate, the committed step in the de novo pyrimidine nucleotide biosynthesis pathway.</text>
</comment>
<comment type="catalytic activity">
    <reaction evidence="1">
        <text>carbamoyl phosphate + L-aspartate = N-carbamoyl-L-aspartate + phosphate + H(+)</text>
        <dbReference type="Rhea" id="RHEA:20013"/>
        <dbReference type="ChEBI" id="CHEBI:15378"/>
        <dbReference type="ChEBI" id="CHEBI:29991"/>
        <dbReference type="ChEBI" id="CHEBI:32814"/>
        <dbReference type="ChEBI" id="CHEBI:43474"/>
        <dbReference type="ChEBI" id="CHEBI:58228"/>
        <dbReference type="EC" id="2.1.3.2"/>
    </reaction>
</comment>
<comment type="pathway">
    <text evidence="1">Pyrimidine metabolism; UMP biosynthesis via de novo pathway; (S)-dihydroorotate from bicarbonate: step 2/3.</text>
</comment>
<comment type="subunit">
    <text evidence="1">Heterododecamer (2C3:3R2) of six catalytic PyrB chains organized as two trimers (C3), and six regulatory PyrI chains organized as three dimers (R2).</text>
</comment>
<comment type="similarity">
    <text evidence="1">Belongs to the aspartate/ornithine carbamoyltransferase superfamily. ATCase family.</text>
</comment>
<comment type="sequence caution" evidence="2">
    <conflict type="erroneous initiation">
        <sequence resource="EMBL-CDS" id="ABF33764"/>
    </conflict>
</comment>
<protein>
    <recommendedName>
        <fullName evidence="1">Aspartate carbamoyltransferase catalytic subunit</fullName>
        <ecNumber evidence="1">2.1.3.2</ecNumber>
    </recommendedName>
    <alternativeName>
        <fullName evidence="1">Aspartate transcarbamylase</fullName>
        <shortName evidence="1">ATCase</shortName>
    </alternativeName>
</protein>
<organism>
    <name type="scientific">Streptococcus pyogenes serotype M2 (strain MGAS10270)</name>
    <dbReference type="NCBI Taxonomy" id="370552"/>
    <lineage>
        <taxon>Bacteria</taxon>
        <taxon>Bacillati</taxon>
        <taxon>Bacillota</taxon>
        <taxon>Bacilli</taxon>
        <taxon>Lactobacillales</taxon>
        <taxon>Streptococcaceae</taxon>
        <taxon>Streptococcus</taxon>
    </lineage>
</organism>
<feature type="chain" id="PRO_0000321165" description="Aspartate carbamoyltransferase catalytic subunit">
    <location>
        <begin position="1"/>
        <end position="311"/>
    </location>
</feature>
<feature type="binding site" evidence="1">
    <location>
        <position position="59"/>
    </location>
    <ligand>
        <name>carbamoyl phosphate</name>
        <dbReference type="ChEBI" id="CHEBI:58228"/>
    </ligand>
</feature>
<feature type="binding site" evidence="1">
    <location>
        <position position="60"/>
    </location>
    <ligand>
        <name>carbamoyl phosphate</name>
        <dbReference type="ChEBI" id="CHEBI:58228"/>
    </ligand>
</feature>
<feature type="binding site" evidence="1">
    <location>
        <position position="87"/>
    </location>
    <ligand>
        <name>L-aspartate</name>
        <dbReference type="ChEBI" id="CHEBI:29991"/>
    </ligand>
</feature>
<feature type="binding site" evidence="1">
    <location>
        <position position="109"/>
    </location>
    <ligand>
        <name>carbamoyl phosphate</name>
        <dbReference type="ChEBI" id="CHEBI:58228"/>
    </ligand>
</feature>
<feature type="binding site" evidence="1">
    <location>
        <position position="139"/>
    </location>
    <ligand>
        <name>carbamoyl phosphate</name>
        <dbReference type="ChEBI" id="CHEBI:58228"/>
    </ligand>
</feature>
<feature type="binding site" evidence="1">
    <location>
        <position position="142"/>
    </location>
    <ligand>
        <name>carbamoyl phosphate</name>
        <dbReference type="ChEBI" id="CHEBI:58228"/>
    </ligand>
</feature>
<feature type="binding site" evidence="1">
    <location>
        <position position="172"/>
    </location>
    <ligand>
        <name>L-aspartate</name>
        <dbReference type="ChEBI" id="CHEBI:29991"/>
    </ligand>
</feature>
<feature type="binding site" evidence="1">
    <location>
        <position position="224"/>
    </location>
    <ligand>
        <name>L-aspartate</name>
        <dbReference type="ChEBI" id="CHEBI:29991"/>
    </ligand>
</feature>
<feature type="binding site" evidence="1">
    <location>
        <position position="265"/>
    </location>
    <ligand>
        <name>carbamoyl phosphate</name>
        <dbReference type="ChEBI" id="CHEBI:58228"/>
    </ligand>
</feature>
<feature type="binding site" evidence="1">
    <location>
        <position position="266"/>
    </location>
    <ligand>
        <name>carbamoyl phosphate</name>
        <dbReference type="ChEBI" id="CHEBI:58228"/>
    </ligand>
</feature>
<sequence>MSVVNNRVALTNLVSMEALTTEEVLGLINRGSEYKAGKVVISDHQKDLVANLFFENSTRTHKSFEVAEKKLGLTVLDFNADASAVNKGESLYDTVLTMSALGTDICVIRHPEDDYYKELVESPTITASIVNGGDGSGQHPSQCLLDLLTIYEEFGRFEGLKIAIAGDLTHSRVAKSNMQILKRLGAELYFYGPEEWYSEAFNAYGTYIAIDQIIKELDVLMLLRVQHERHDGHQSFSKEGYHQAFGLTQERYQQLKDSAIIMHPAPVNRDVEIADSLVEAPKARIVSQMANGVFVRMAIIEAILNGRNKNS</sequence>
<name>PYRB_STRPD</name>
<keyword id="KW-0665">Pyrimidine biosynthesis</keyword>
<keyword id="KW-0808">Transferase</keyword>
<accession>Q1JHH2</accession>
<gene>
    <name evidence="1" type="primary">pyrB</name>
    <name type="ordered locus">MGAS10270_Spy0699</name>
</gene>
<evidence type="ECO:0000255" key="1">
    <source>
        <dbReference type="HAMAP-Rule" id="MF_00001"/>
    </source>
</evidence>
<evidence type="ECO:0000305" key="2"/>
<proteinExistence type="inferred from homology"/>
<reference key="1">
    <citation type="journal article" date="2006" name="Proc. Natl. Acad. Sci. U.S.A.">
        <title>Molecular genetic anatomy of inter- and intraserotype variation in the human bacterial pathogen group A Streptococcus.</title>
        <authorList>
            <person name="Beres S.B."/>
            <person name="Richter E.W."/>
            <person name="Nagiec M.J."/>
            <person name="Sumby P."/>
            <person name="Porcella S.F."/>
            <person name="DeLeo F.R."/>
            <person name="Musser J.M."/>
        </authorList>
    </citation>
    <scope>NUCLEOTIDE SEQUENCE [LARGE SCALE GENOMIC DNA]</scope>
    <source>
        <strain>MGAS10270</strain>
    </source>
</reference>
<dbReference type="EC" id="2.1.3.2" evidence="1"/>
<dbReference type="EMBL" id="CP000260">
    <property type="protein sequence ID" value="ABF33764.1"/>
    <property type="status" value="ALT_INIT"/>
    <property type="molecule type" value="Genomic_DNA"/>
</dbReference>
<dbReference type="SMR" id="Q1JHH2"/>
<dbReference type="KEGG" id="sph:MGAS10270_Spy0699"/>
<dbReference type="HOGENOM" id="CLU_043846_2_1_9"/>
<dbReference type="UniPathway" id="UPA00070">
    <property type="reaction ID" value="UER00116"/>
</dbReference>
<dbReference type="Proteomes" id="UP000002436">
    <property type="component" value="Chromosome"/>
</dbReference>
<dbReference type="GO" id="GO:0005829">
    <property type="term" value="C:cytosol"/>
    <property type="evidence" value="ECO:0007669"/>
    <property type="project" value="TreeGrafter"/>
</dbReference>
<dbReference type="GO" id="GO:0016597">
    <property type="term" value="F:amino acid binding"/>
    <property type="evidence" value="ECO:0007669"/>
    <property type="project" value="InterPro"/>
</dbReference>
<dbReference type="GO" id="GO:0004070">
    <property type="term" value="F:aspartate carbamoyltransferase activity"/>
    <property type="evidence" value="ECO:0007669"/>
    <property type="project" value="UniProtKB-UniRule"/>
</dbReference>
<dbReference type="GO" id="GO:0006207">
    <property type="term" value="P:'de novo' pyrimidine nucleobase biosynthetic process"/>
    <property type="evidence" value="ECO:0007669"/>
    <property type="project" value="InterPro"/>
</dbReference>
<dbReference type="GO" id="GO:0044205">
    <property type="term" value="P:'de novo' UMP biosynthetic process"/>
    <property type="evidence" value="ECO:0007669"/>
    <property type="project" value="UniProtKB-UniRule"/>
</dbReference>
<dbReference type="GO" id="GO:0006520">
    <property type="term" value="P:amino acid metabolic process"/>
    <property type="evidence" value="ECO:0007669"/>
    <property type="project" value="InterPro"/>
</dbReference>
<dbReference type="FunFam" id="3.40.50.1370:FF:000011">
    <property type="entry name" value="Aspartate carbamoyltransferase"/>
    <property type="match status" value="1"/>
</dbReference>
<dbReference type="Gene3D" id="3.40.50.1370">
    <property type="entry name" value="Aspartate/ornithine carbamoyltransferase"/>
    <property type="match status" value="2"/>
</dbReference>
<dbReference type="HAMAP" id="MF_00001">
    <property type="entry name" value="Asp_carb_tr"/>
    <property type="match status" value="1"/>
</dbReference>
<dbReference type="InterPro" id="IPR006132">
    <property type="entry name" value="Asp/Orn_carbamoyltranf_P-bd"/>
</dbReference>
<dbReference type="InterPro" id="IPR006130">
    <property type="entry name" value="Asp/Orn_carbamoylTrfase"/>
</dbReference>
<dbReference type="InterPro" id="IPR036901">
    <property type="entry name" value="Asp/Orn_carbamoylTrfase_sf"/>
</dbReference>
<dbReference type="InterPro" id="IPR002082">
    <property type="entry name" value="Asp_carbamoyltransf"/>
</dbReference>
<dbReference type="InterPro" id="IPR006131">
    <property type="entry name" value="Asp_carbamoyltransf_Asp/Orn-bd"/>
</dbReference>
<dbReference type="NCBIfam" id="TIGR00670">
    <property type="entry name" value="asp_carb_tr"/>
    <property type="match status" value="1"/>
</dbReference>
<dbReference type="NCBIfam" id="NF002032">
    <property type="entry name" value="PRK00856.1"/>
    <property type="match status" value="1"/>
</dbReference>
<dbReference type="PANTHER" id="PTHR45753:SF6">
    <property type="entry name" value="ASPARTATE CARBAMOYLTRANSFERASE"/>
    <property type="match status" value="1"/>
</dbReference>
<dbReference type="PANTHER" id="PTHR45753">
    <property type="entry name" value="ORNITHINE CARBAMOYLTRANSFERASE, MITOCHONDRIAL"/>
    <property type="match status" value="1"/>
</dbReference>
<dbReference type="Pfam" id="PF00185">
    <property type="entry name" value="OTCace"/>
    <property type="match status" value="1"/>
</dbReference>
<dbReference type="Pfam" id="PF02729">
    <property type="entry name" value="OTCace_N"/>
    <property type="match status" value="1"/>
</dbReference>
<dbReference type="PRINTS" id="PR00100">
    <property type="entry name" value="AOTCASE"/>
</dbReference>
<dbReference type="PRINTS" id="PR00101">
    <property type="entry name" value="ATCASE"/>
</dbReference>
<dbReference type="SUPFAM" id="SSF53671">
    <property type="entry name" value="Aspartate/ornithine carbamoyltransferase"/>
    <property type="match status" value="1"/>
</dbReference>
<dbReference type="PROSITE" id="PS00097">
    <property type="entry name" value="CARBAMOYLTRANSFERASE"/>
    <property type="match status" value="1"/>
</dbReference>